<protein>
    <recommendedName>
        <fullName evidence="1">Methylthioribulose-1-phosphate dehydratase</fullName>
        <shortName evidence="1">MTRu-1-P dehydratase</shortName>
        <ecNumber evidence="1 7">4.2.1.109</ecNumber>
    </recommendedName>
    <alternativeName>
        <fullName evidence="1">APAF1-interacting protein</fullName>
        <shortName>hAPIP</shortName>
    </alternativeName>
</protein>
<gene>
    <name evidence="1" type="primary">APIP</name>
    <name type="ORF">CGI-29</name>
</gene>
<evidence type="ECO:0000255" key="1">
    <source>
        <dbReference type="HAMAP-Rule" id="MF_03116"/>
    </source>
</evidence>
<evidence type="ECO:0000269" key="2">
    <source>
    </source>
</evidence>
<evidence type="ECO:0000269" key="3">
    <source>
    </source>
</evidence>
<evidence type="ECO:0000269" key="4">
    <source>
    </source>
</evidence>
<evidence type="ECO:0000269" key="5">
    <source>
    </source>
</evidence>
<evidence type="ECO:0000269" key="6">
    <source>
    </source>
</evidence>
<evidence type="ECO:0000269" key="7">
    <source>
    </source>
</evidence>
<evidence type="ECO:0000305" key="8"/>
<evidence type="ECO:0000305" key="9">
    <source>
    </source>
</evidence>
<evidence type="ECO:0007744" key="10">
    <source>
        <dbReference type="PDB" id="4M6R"/>
    </source>
</evidence>
<evidence type="ECO:0007744" key="11">
    <source>
    </source>
</evidence>
<evidence type="ECO:0007744" key="12">
    <source>
    </source>
</evidence>
<evidence type="ECO:0007829" key="13">
    <source>
        <dbReference type="PDB" id="4M6R"/>
    </source>
</evidence>
<feature type="chain" id="PRO_0000239022" description="Methylthioribulose-1-phosphate dehydratase">
    <location>
        <begin position="1"/>
        <end position="242"/>
    </location>
</feature>
<feature type="active site" description="Proton donor/acceptor" evidence="1 7">
    <location>
        <position position="139"/>
    </location>
</feature>
<feature type="binding site" evidence="1 9">
    <location>
        <position position="97"/>
    </location>
    <ligand>
        <name>substrate</name>
    </ligand>
</feature>
<feature type="binding site" evidence="1 9 10">
    <location>
        <position position="115"/>
    </location>
    <ligand>
        <name>Zn(2+)</name>
        <dbReference type="ChEBI" id="CHEBI:29105"/>
    </ligand>
</feature>
<feature type="binding site" evidence="1 9 10">
    <location>
        <position position="117"/>
    </location>
    <ligand>
        <name>Zn(2+)</name>
        <dbReference type="ChEBI" id="CHEBI:29105"/>
    </ligand>
</feature>
<feature type="binding site" evidence="1 9 10">
    <location>
        <position position="195"/>
    </location>
    <ligand>
        <name>Zn(2+)</name>
        <dbReference type="ChEBI" id="CHEBI:29105"/>
    </ligand>
</feature>
<feature type="modified residue" description="Phosphoserine" evidence="11 12">
    <location>
        <position position="87"/>
    </location>
</feature>
<feature type="splice variant" id="VSP_044403" description="In isoform 2." evidence="8">
    <original>MSGCDAREGDCCSRRCGAQDKEHPRYLIPELCKQFYHLGWVTGTGGGISLKHG</original>
    <variation>MLGRETVVPGDAARS</variation>
    <location>
        <begin position="1"/>
        <end position="53"/>
    </location>
</feature>
<feature type="sequence variant" id="VAR_026575" description="In dbSNP:rs2956114." evidence="2 4">
    <original>R</original>
    <variation>W</variation>
    <location>
        <position position="7"/>
    </location>
</feature>
<feature type="sequence variant" id="VAR_026576" description="In dbSNP:rs17850326." evidence="4">
    <original>H</original>
    <variation>R</variation>
    <location>
        <position position="23"/>
    </location>
</feature>
<feature type="sequence variant" id="VAR_026577" description="In dbSNP:rs1977420." evidence="2 4">
    <original>C</original>
    <variation>Y</variation>
    <location>
        <position position="76"/>
    </location>
</feature>
<feature type="sequence variant" id="VAR_026578" description="In dbSNP:rs17850327." evidence="4">
    <original>M</original>
    <variation>V</variation>
    <location>
        <position position="181"/>
    </location>
</feature>
<feature type="mutagenesis site" description="Does not affect ability of cells to grow in media where methionine is replaced by 5-methylthioadenosine; when associated with A,D-87 and A,D-89." evidence="6">
    <original>S</original>
    <variation>A</variation>
    <variation>D</variation>
    <location>
        <position position="84"/>
    </location>
</feature>
<feature type="mutagenesis site" description="Does not affect ability of cells to grow in media where methionine is replaced by 5-methylthioadenosine; when associated with A,D-84 and A,D-89." evidence="6">
    <original>S</original>
    <variation>A</variation>
    <variation>D</variation>
    <location>
        <position position="87"/>
    </location>
</feature>
<feature type="mutagenesis site" description="Does not affect ability of cells to grow in media where methionine is replaced by 5-methylthioadenosine; when associated with A,D-84 and A,D-87." evidence="6">
    <original>S</original>
    <variation>A</variation>
    <variation>D</variation>
    <location>
        <position position="89"/>
    </location>
</feature>
<feature type="mutagenesis site" description="Mildly reduced enzyme activity." evidence="7">
    <original>Q</original>
    <variation>A</variation>
    <location>
        <position position="96"/>
    </location>
</feature>
<feature type="mutagenesis site" description="Acts as a dominant negative mutant; unable to use 5'-methylthioadenosine as source of methionine. Does not affect the ability to bind CASP1 and to inhibit cell death induced by CASP9 overexpression." evidence="5">
    <original>C</original>
    <variation>A</variation>
    <location>
        <position position="97"/>
    </location>
</feature>
<feature type="mutagenesis site" description="Almost complete loss of enzyme activity. Abolishes protection against pyroptosis. No effect on anti-apoptotic activity." evidence="7">
    <original>C</original>
    <variation>A</variation>
    <location>
        <position position="97"/>
    </location>
</feature>
<feature type="mutagenesis site" description="Almost complete loss of enzyme activity. Abolishes protection against pyroptosis. No effect on anti-apoptotic activity." evidence="7">
    <original>H</original>
    <variation>A</variation>
    <location>
        <position position="115"/>
    </location>
</feature>
<feature type="mutagenesis site" description="Impaired ability of cells to grow in media where methionine is replaced by 5-methylthioadenosine; when associated with A-117 and A-195. Unable to inhibit both CASP1 and CASP9 mediated cell death." evidence="5 6">
    <original>H</original>
    <variation>A</variation>
    <location>
        <position position="115"/>
    </location>
</feature>
<feature type="mutagenesis site" description="Impaired ability of cells to grow in media where methionine is replaced by 5-methylthioadenosine; when associated with A-115 and A-195." evidence="6">
    <original>H</original>
    <variation>A</variation>
    <location>
        <position position="117"/>
    </location>
</feature>
<feature type="mutagenesis site" description="Almost complete loss of enzyme activity. Abolishes protection against pyroptosis. No effect on anti-apoptotic activity." evidence="7">
    <original>E</original>
    <variation>A</variation>
    <location>
        <position position="139"/>
    </location>
</feature>
<feature type="mutagenesis site" description="Impaired ability of cells to grow in media where methionine is replaced by 5-methylthioadenosine; when associated with 87-A--A-89." evidence="6">
    <original>H</original>
    <variation>A</variation>
    <location>
        <position position="195"/>
    </location>
</feature>
<feature type="sequence conflict" description="In Ref. 1; AAD27738." evidence="8" ref="1">
    <original>R</original>
    <variation>G</variation>
    <location>
        <position position="7"/>
    </location>
</feature>
<feature type="sequence conflict" description="In Ref. 1; AAD27738." evidence="8" ref="1">
    <original>D</original>
    <variation>T</variation>
    <location>
        <position position="172"/>
    </location>
</feature>
<feature type="helix" evidence="13">
    <location>
        <begin position="24"/>
        <end position="37"/>
    </location>
</feature>
<feature type="helix" evidence="13">
    <location>
        <begin position="42"/>
        <end position="44"/>
    </location>
</feature>
<feature type="strand" evidence="13">
    <location>
        <begin position="47"/>
        <end position="52"/>
    </location>
</feature>
<feature type="strand" evidence="13">
    <location>
        <begin position="55"/>
        <end position="58"/>
    </location>
</feature>
<feature type="helix" evidence="13">
    <location>
        <begin position="65"/>
        <end position="67"/>
    </location>
</feature>
<feature type="helix" evidence="13">
    <location>
        <begin position="70"/>
        <end position="72"/>
    </location>
</feature>
<feature type="strand" evidence="13">
    <location>
        <begin position="74"/>
        <end position="76"/>
    </location>
</feature>
<feature type="strand" evidence="13">
    <location>
        <begin position="82"/>
        <end position="84"/>
    </location>
</feature>
<feature type="helix" evidence="13">
    <location>
        <begin position="88"/>
        <end position="90"/>
    </location>
</feature>
<feature type="helix" evidence="13">
    <location>
        <begin position="98"/>
        <end position="108"/>
    </location>
</feature>
<feature type="strand" evidence="13">
    <location>
        <begin position="111"/>
        <end position="116"/>
    </location>
</feature>
<feature type="helix" evidence="13">
    <location>
        <begin position="119"/>
        <end position="127"/>
    </location>
</feature>
<feature type="strand" evidence="13">
    <location>
        <begin position="130"/>
        <end position="137"/>
    </location>
</feature>
<feature type="helix" evidence="13">
    <location>
        <begin position="139"/>
        <end position="143"/>
    </location>
</feature>
<feature type="turn" evidence="13">
    <location>
        <begin position="147"/>
        <end position="149"/>
    </location>
</feature>
<feature type="strand" evidence="13">
    <location>
        <begin position="157"/>
        <end position="164"/>
    </location>
</feature>
<feature type="helix" evidence="13">
    <location>
        <begin position="170"/>
        <end position="183"/>
    </location>
</feature>
<feature type="strand" evidence="13">
    <location>
        <begin position="188"/>
        <end position="192"/>
    </location>
</feature>
<feature type="turn" evidence="13">
    <location>
        <begin position="193"/>
        <end position="195"/>
    </location>
</feature>
<feature type="strand" evidence="13">
    <location>
        <begin position="196"/>
        <end position="203"/>
    </location>
</feature>
<feature type="helix" evidence="13">
    <location>
        <begin position="204"/>
        <end position="226"/>
    </location>
</feature>
<dbReference type="EC" id="4.2.1.109" evidence="1 7"/>
<dbReference type="EMBL" id="AF132963">
    <property type="protein sequence ID" value="AAD27738.1"/>
    <property type="molecule type" value="mRNA"/>
</dbReference>
<dbReference type="EMBL" id="AK292648">
    <property type="protein sequence ID" value="BAF85337.1"/>
    <property type="molecule type" value="mRNA"/>
</dbReference>
<dbReference type="EMBL" id="AC107928">
    <property type="status" value="NOT_ANNOTATED_CDS"/>
    <property type="molecule type" value="Genomic_DNA"/>
</dbReference>
<dbReference type="EMBL" id="BC008440">
    <property type="protein sequence ID" value="AAH08440.1"/>
    <property type="molecule type" value="mRNA"/>
</dbReference>
<dbReference type="EMBL" id="BC009077">
    <property type="protein sequence ID" value="AAH09077.1"/>
    <property type="molecule type" value="mRNA"/>
</dbReference>
<dbReference type="EMBL" id="BC017594">
    <property type="protein sequence ID" value="AAH17594.1"/>
    <property type="molecule type" value="mRNA"/>
</dbReference>
<dbReference type="CCDS" id="CCDS7895.1">
    <molecule id="Q96GX9-1"/>
</dbReference>
<dbReference type="RefSeq" id="NP_057041.2">
    <molecule id="Q96GX9-1"/>
    <property type="nucleotide sequence ID" value="NM_015957.4"/>
</dbReference>
<dbReference type="PDB" id="4M6R">
    <property type="method" value="X-ray"/>
    <property type="resolution" value="2.00 A"/>
    <property type="chains" value="A/B/C/D=20-242"/>
</dbReference>
<dbReference type="PDBsum" id="4M6R"/>
<dbReference type="SMR" id="Q96GX9"/>
<dbReference type="BioGRID" id="119265">
    <property type="interactions" value="53"/>
</dbReference>
<dbReference type="FunCoup" id="Q96GX9">
    <property type="interactions" value="1334"/>
</dbReference>
<dbReference type="IntAct" id="Q96GX9">
    <property type="interactions" value="53"/>
</dbReference>
<dbReference type="STRING" id="9606.ENSP00000379133"/>
<dbReference type="GlyGen" id="Q96GX9">
    <property type="glycosylation" value="1 site, 1 O-linked glycan (1 site)"/>
</dbReference>
<dbReference type="iPTMnet" id="Q96GX9"/>
<dbReference type="PhosphoSitePlus" id="Q96GX9"/>
<dbReference type="BioMuta" id="APIP"/>
<dbReference type="DMDM" id="74731866"/>
<dbReference type="jPOST" id="Q96GX9"/>
<dbReference type="MassIVE" id="Q96GX9"/>
<dbReference type="PaxDb" id="9606-ENSP00000379133"/>
<dbReference type="PeptideAtlas" id="Q96GX9"/>
<dbReference type="ProteomicsDB" id="76681">
    <molecule id="Q96GX9-1"/>
</dbReference>
<dbReference type="Pumba" id="Q96GX9"/>
<dbReference type="Antibodypedia" id="25889">
    <property type="antibodies" value="327 antibodies from 31 providers"/>
</dbReference>
<dbReference type="DNASU" id="51074"/>
<dbReference type="Ensembl" id="ENST00000395787.4">
    <molecule id="Q96GX9-1"/>
    <property type="protein sequence ID" value="ENSP00000379133.3"/>
    <property type="gene ID" value="ENSG00000149089.13"/>
</dbReference>
<dbReference type="GeneID" id="51074"/>
<dbReference type="KEGG" id="hsa:51074"/>
<dbReference type="MANE-Select" id="ENST00000395787.4">
    <property type="protein sequence ID" value="ENSP00000379133.3"/>
    <property type="RefSeq nucleotide sequence ID" value="NM_015957.4"/>
    <property type="RefSeq protein sequence ID" value="NP_057041.2"/>
</dbReference>
<dbReference type="UCSC" id="uc001mvs.4">
    <molecule id="Q96GX9-1"/>
    <property type="organism name" value="human"/>
</dbReference>
<dbReference type="AGR" id="HGNC:17581"/>
<dbReference type="CTD" id="51074"/>
<dbReference type="DisGeNET" id="51074"/>
<dbReference type="GeneCards" id="APIP"/>
<dbReference type="HGNC" id="HGNC:17581">
    <property type="gene designation" value="APIP"/>
</dbReference>
<dbReference type="HPA" id="ENSG00000149089">
    <property type="expression patterns" value="Low tissue specificity"/>
</dbReference>
<dbReference type="MIM" id="612491">
    <property type="type" value="gene"/>
</dbReference>
<dbReference type="neXtProt" id="NX_Q96GX9"/>
<dbReference type="OpenTargets" id="ENSG00000149089"/>
<dbReference type="PharmGKB" id="PA142672601"/>
<dbReference type="VEuPathDB" id="HostDB:ENSG00000149089"/>
<dbReference type="eggNOG" id="KOG2631">
    <property type="taxonomic scope" value="Eukaryota"/>
</dbReference>
<dbReference type="GeneTree" id="ENSGT00390000001680"/>
<dbReference type="HOGENOM" id="CLU_006033_4_0_1"/>
<dbReference type="InParanoid" id="Q96GX9"/>
<dbReference type="OMA" id="WFPGTSG"/>
<dbReference type="OrthoDB" id="191080at2759"/>
<dbReference type="PAN-GO" id="Q96GX9">
    <property type="GO annotations" value="3 GO annotations based on evolutionary models"/>
</dbReference>
<dbReference type="PhylomeDB" id="Q96GX9"/>
<dbReference type="TreeFam" id="TF105632"/>
<dbReference type="BRENDA" id="4.2.1.109">
    <property type="organism ID" value="2681"/>
</dbReference>
<dbReference type="PathwayCommons" id="Q96GX9"/>
<dbReference type="Reactome" id="R-HSA-111458">
    <property type="pathway name" value="Formation of apoptosome"/>
</dbReference>
<dbReference type="Reactome" id="R-HSA-1237112">
    <property type="pathway name" value="Methionine salvage pathway"/>
</dbReference>
<dbReference type="Reactome" id="R-HSA-9627069">
    <property type="pathway name" value="Regulation of the apoptosome activity"/>
</dbReference>
<dbReference type="SignaLink" id="Q96GX9"/>
<dbReference type="SIGNOR" id="Q96GX9"/>
<dbReference type="UniPathway" id="UPA00904">
    <property type="reaction ID" value="UER00875"/>
</dbReference>
<dbReference type="BioGRID-ORCS" id="51074">
    <property type="hits" value="66 hits in 1123 CRISPR screens"/>
</dbReference>
<dbReference type="ChiTaRS" id="APIP">
    <property type="organism name" value="human"/>
</dbReference>
<dbReference type="EvolutionaryTrace" id="Q96GX9"/>
<dbReference type="GeneWiki" id="APIP"/>
<dbReference type="GenomeRNAi" id="51074"/>
<dbReference type="Pharos" id="Q96GX9">
    <property type="development level" value="Tbio"/>
</dbReference>
<dbReference type="PRO" id="PR:Q96GX9"/>
<dbReference type="Proteomes" id="UP000005640">
    <property type="component" value="Chromosome 11"/>
</dbReference>
<dbReference type="RNAct" id="Q96GX9">
    <property type="molecule type" value="protein"/>
</dbReference>
<dbReference type="Bgee" id="ENSG00000149089">
    <property type="expression patterns" value="Expressed in C1 segment of cervical spinal cord and 102 other cell types or tissues"/>
</dbReference>
<dbReference type="ExpressionAtlas" id="Q96GX9">
    <property type="expression patterns" value="baseline and differential"/>
</dbReference>
<dbReference type="GO" id="GO:0005737">
    <property type="term" value="C:cytoplasm"/>
    <property type="evidence" value="ECO:0000314"/>
    <property type="project" value="UniProtKB"/>
</dbReference>
<dbReference type="GO" id="GO:0005829">
    <property type="term" value="C:cytosol"/>
    <property type="evidence" value="ECO:0000304"/>
    <property type="project" value="Reactome"/>
</dbReference>
<dbReference type="GO" id="GO:0042802">
    <property type="term" value="F:identical protein binding"/>
    <property type="evidence" value="ECO:0000353"/>
    <property type="project" value="IntAct"/>
</dbReference>
<dbReference type="GO" id="GO:0046570">
    <property type="term" value="F:methylthioribulose 1-phosphate dehydratase activity"/>
    <property type="evidence" value="ECO:0000314"/>
    <property type="project" value="UniProtKB"/>
</dbReference>
<dbReference type="GO" id="GO:0008270">
    <property type="term" value="F:zinc ion binding"/>
    <property type="evidence" value="ECO:0000314"/>
    <property type="project" value="UniProtKB"/>
</dbReference>
<dbReference type="GO" id="GO:0006915">
    <property type="term" value="P:apoptotic process"/>
    <property type="evidence" value="ECO:0007669"/>
    <property type="project" value="UniProtKB-KW"/>
</dbReference>
<dbReference type="GO" id="GO:0019509">
    <property type="term" value="P:L-methionine salvage from methylthioadenosine"/>
    <property type="evidence" value="ECO:0000315"/>
    <property type="project" value="UniProtKB"/>
</dbReference>
<dbReference type="GO" id="GO:0043066">
    <property type="term" value="P:negative regulation of apoptotic process"/>
    <property type="evidence" value="ECO:0000315"/>
    <property type="project" value="UniProtKB"/>
</dbReference>
<dbReference type="GO" id="GO:0051289">
    <property type="term" value="P:protein homotetramerization"/>
    <property type="evidence" value="ECO:0000314"/>
    <property type="project" value="UniProtKB"/>
</dbReference>
<dbReference type="GO" id="GO:0070269">
    <property type="term" value="P:pyroptotic inflammatory response"/>
    <property type="evidence" value="ECO:0000315"/>
    <property type="project" value="UniProtKB"/>
</dbReference>
<dbReference type="GO" id="GO:0070372">
    <property type="term" value="P:regulation of ERK1 and ERK2 cascade"/>
    <property type="evidence" value="ECO:0000250"/>
    <property type="project" value="UniProtKB"/>
</dbReference>
<dbReference type="FunFam" id="3.40.225.10:FF:000003">
    <property type="entry name" value="Methylthioribulose-1-phosphate dehydratase"/>
    <property type="match status" value="1"/>
</dbReference>
<dbReference type="Gene3D" id="3.40.225.10">
    <property type="entry name" value="Class II aldolase/adducin N-terminal domain"/>
    <property type="match status" value="1"/>
</dbReference>
<dbReference type="HAMAP" id="MF_03116">
    <property type="entry name" value="Salvage_MtnB_euk"/>
    <property type="match status" value="1"/>
</dbReference>
<dbReference type="InterPro" id="IPR001303">
    <property type="entry name" value="Aldolase_II/adducin_N"/>
</dbReference>
<dbReference type="InterPro" id="IPR036409">
    <property type="entry name" value="Aldolase_II/adducin_N_sf"/>
</dbReference>
<dbReference type="InterPro" id="IPR017714">
    <property type="entry name" value="MethylthioRu-1-P_deHdtase_MtnB"/>
</dbReference>
<dbReference type="InterPro" id="IPR027514">
    <property type="entry name" value="Salvage_MtnB_euk"/>
</dbReference>
<dbReference type="NCBIfam" id="TIGR03328">
    <property type="entry name" value="salvage_mtnB"/>
    <property type="match status" value="1"/>
</dbReference>
<dbReference type="PANTHER" id="PTHR10640">
    <property type="entry name" value="METHYLTHIORIBULOSE-1-PHOSPHATE DEHYDRATASE"/>
    <property type="match status" value="1"/>
</dbReference>
<dbReference type="PANTHER" id="PTHR10640:SF7">
    <property type="entry name" value="METHYLTHIORIBULOSE-1-PHOSPHATE DEHYDRATASE"/>
    <property type="match status" value="1"/>
</dbReference>
<dbReference type="Pfam" id="PF00596">
    <property type="entry name" value="Aldolase_II"/>
    <property type="match status" value="1"/>
</dbReference>
<dbReference type="SMART" id="SM01007">
    <property type="entry name" value="Aldolase_II"/>
    <property type="match status" value="1"/>
</dbReference>
<dbReference type="SUPFAM" id="SSF53639">
    <property type="entry name" value="AraD/HMP-PK domain-like"/>
    <property type="match status" value="1"/>
</dbReference>
<proteinExistence type="evidence at protein level"/>
<accession>Q96GX9</accession>
<accession>A8K9D3</accession>
<accession>Q6PJX6</accession>
<accession>Q8WVU2</accession>
<accession>Q96HK2</accession>
<accession>Q9Y318</accession>
<keyword id="KW-0002">3D-structure</keyword>
<keyword id="KW-0025">Alternative splicing</keyword>
<keyword id="KW-0028">Amino-acid biosynthesis</keyword>
<keyword id="KW-0053">Apoptosis</keyword>
<keyword id="KW-0963">Cytoplasm</keyword>
<keyword id="KW-0456">Lyase</keyword>
<keyword id="KW-0479">Metal-binding</keyword>
<keyword id="KW-0486">Methionine biosynthesis</keyword>
<keyword id="KW-0597">Phosphoprotein</keyword>
<keyword id="KW-1267">Proteomics identification</keyword>
<keyword id="KW-1185">Reference proteome</keyword>
<keyword id="KW-0862">Zinc</keyword>
<name>MTNB_HUMAN</name>
<reference key="1">
    <citation type="journal article" date="2000" name="Genome Res.">
        <title>Identification of novel human genes evolutionarily conserved in Caenorhabditis elegans by comparative proteomics.</title>
        <authorList>
            <person name="Lai C.-H."/>
            <person name="Chou C.-Y."/>
            <person name="Ch'ang L.-Y."/>
            <person name="Liu C.-S."/>
            <person name="Lin W.-C."/>
        </authorList>
    </citation>
    <scope>NUCLEOTIDE SEQUENCE [LARGE SCALE MRNA] (ISOFORM 1)</scope>
</reference>
<reference key="2">
    <citation type="journal article" date="2004" name="Nat. Genet.">
        <title>Complete sequencing and characterization of 21,243 full-length human cDNAs.</title>
        <authorList>
            <person name="Ota T."/>
            <person name="Suzuki Y."/>
            <person name="Nishikawa T."/>
            <person name="Otsuki T."/>
            <person name="Sugiyama T."/>
            <person name="Irie R."/>
            <person name="Wakamatsu A."/>
            <person name="Hayashi K."/>
            <person name="Sato H."/>
            <person name="Nagai K."/>
            <person name="Kimura K."/>
            <person name="Makita H."/>
            <person name="Sekine M."/>
            <person name="Obayashi M."/>
            <person name="Nishi T."/>
            <person name="Shibahara T."/>
            <person name="Tanaka T."/>
            <person name="Ishii S."/>
            <person name="Yamamoto J."/>
            <person name="Saito K."/>
            <person name="Kawai Y."/>
            <person name="Isono Y."/>
            <person name="Nakamura Y."/>
            <person name="Nagahari K."/>
            <person name="Murakami K."/>
            <person name="Yasuda T."/>
            <person name="Iwayanagi T."/>
            <person name="Wagatsuma M."/>
            <person name="Shiratori A."/>
            <person name="Sudo H."/>
            <person name="Hosoiri T."/>
            <person name="Kaku Y."/>
            <person name="Kodaira H."/>
            <person name="Kondo H."/>
            <person name="Sugawara M."/>
            <person name="Takahashi M."/>
            <person name="Kanda K."/>
            <person name="Yokoi T."/>
            <person name="Furuya T."/>
            <person name="Kikkawa E."/>
            <person name="Omura Y."/>
            <person name="Abe K."/>
            <person name="Kamihara K."/>
            <person name="Katsuta N."/>
            <person name="Sato K."/>
            <person name="Tanikawa M."/>
            <person name="Yamazaki M."/>
            <person name="Ninomiya K."/>
            <person name="Ishibashi T."/>
            <person name="Yamashita H."/>
            <person name="Murakawa K."/>
            <person name="Fujimori K."/>
            <person name="Tanai H."/>
            <person name="Kimata M."/>
            <person name="Watanabe M."/>
            <person name="Hiraoka S."/>
            <person name="Chiba Y."/>
            <person name="Ishida S."/>
            <person name="Ono Y."/>
            <person name="Takiguchi S."/>
            <person name="Watanabe S."/>
            <person name="Yosida M."/>
            <person name="Hotuta T."/>
            <person name="Kusano J."/>
            <person name="Kanehori K."/>
            <person name="Takahashi-Fujii A."/>
            <person name="Hara H."/>
            <person name="Tanase T.-O."/>
            <person name="Nomura Y."/>
            <person name="Togiya S."/>
            <person name="Komai F."/>
            <person name="Hara R."/>
            <person name="Takeuchi K."/>
            <person name="Arita M."/>
            <person name="Imose N."/>
            <person name="Musashino K."/>
            <person name="Yuuki H."/>
            <person name="Oshima A."/>
            <person name="Sasaki N."/>
            <person name="Aotsuka S."/>
            <person name="Yoshikawa Y."/>
            <person name="Matsunawa H."/>
            <person name="Ichihara T."/>
            <person name="Shiohata N."/>
            <person name="Sano S."/>
            <person name="Moriya S."/>
            <person name="Momiyama H."/>
            <person name="Satoh N."/>
            <person name="Takami S."/>
            <person name="Terashima Y."/>
            <person name="Suzuki O."/>
            <person name="Nakagawa S."/>
            <person name="Senoh A."/>
            <person name="Mizoguchi H."/>
            <person name="Goto Y."/>
            <person name="Shimizu F."/>
            <person name="Wakebe H."/>
            <person name="Hishigaki H."/>
            <person name="Watanabe T."/>
            <person name="Sugiyama A."/>
            <person name="Takemoto M."/>
            <person name="Kawakami B."/>
            <person name="Yamazaki M."/>
            <person name="Watanabe K."/>
            <person name="Kumagai A."/>
            <person name="Itakura S."/>
            <person name="Fukuzumi Y."/>
            <person name="Fujimori Y."/>
            <person name="Komiyama M."/>
            <person name="Tashiro H."/>
            <person name="Tanigami A."/>
            <person name="Fujiwara T."/>
            <person name="Ono T."/>
            <person name="Yamada K."/>
            <person name="Fujii Y."/>
            <person name="Ozaki K."/>
            <person name="Hirao M."/>
            <person name="Ohmori Y."/>
            <person name="Kawabata A."/>
            <person name="Hikiji T."/>
            <person name="Kobatake N."/>
            <person name="Inagaki H."/>
            <person name="Ikema Y."/>
            <person name="Okamoto S."/>
            <person name="Okitani R."/>
            <person name="Kawakami T."/>
            <person name="Noguchi S."/>
            <person name="Itoh T."/>
            <person name="Shigeta K."/>
            <person name="Senba T."/>
            <person name="Matsumura K."/>
            <person name="Nakajima Y."/>
            <person name="Mizuno T."/>
            <person name="Morinaga M."/>
            <person name="Sasaki M."/>
            <person name="Togashi T."/>
            <person name="Oyama M."/>
            <person name="Hata H."/>
            <person name="Watanabe M."/>
            <person name="Komatsu T."/>
            <person name="Mizushima-Sugano J."/>
            <person name="Satoh T."/>
            <person name="Shirai Y."/>
            <person name="Takahashi Y."/>
            <person name="Nakagawa K."/>
            <person name="Okumura K."/>
            <person name="Nagase T."/>
            <person name="Nomura N."/>
            <person name="Kikuchi H."/>
            <person name="Masuho Y."/>
            <person name="Yamashita R."/>
            <person name="Nakai K."/>
            <person name="Yada T."/>
            <person name="Nakamura Y."/>
            <person name="Ohara O."/>
            <person name="Isogai T."/>
            <person name="Sugano S."/>
        </authorList>
    </citation>
    <scope>NUCLEOTIDE SEQUENCE [LARGE SCALE MRNA] (ISOFORM 1)</scope>
    <scope>VARIANTS TRP-7 AND TYR-76</scope>
    <source>
        <tissue>Thymus</tissue>
    </source>
</reference>
<reference key="3">
    <citation type="journal article" date="2006" name="Nature">
        <title>Human chromosome 11 DNA sequence and analysis including novel gene identification.</title>
        <authorList>
            <person name="Taylor T.D."/>
            <person name="Noguchi H."/>
            <person name="Totoki Y."/>
            <person name="Toyoda A."/>
            <person name="Kuroki Y."/>
            <person name="Dewar K."/>
            <person name="Lloyd C."/>
            <person name="Itoh T."/>
            <person name="Takeda T."/>
            <person name="Kim D.-W."/>
            <person name="She X."/>
            <person name="Barlow K.F."/>
            <person name="Bloom T."/>
            <person name="Bruford E."/>
            <person name="Chang J.L."/>
            <person name="Cuomo C.A."/>
            <person name="Eichler E."/>
            <person name="FitzGerald M.G."/>
            <person name="Jaffe D.B."/>
            <person name="LaButti K."/>
            <person name="Nicol R."/>
            <person name="Park H.-S."/>
            <person name="Seaman C."/>
            <person name="Sougnez C."/>
            <person name="Yang X."/>
            <person name="Zimmer A.R."/>
            <person name="Zody M.C."/>
            <person name="Birren B.W."/>
            <person name="Nusbaum C."/>
            <person name="Fujiyama A."/>
            <person name="Hattori M."/>
            <person name="Rogers J."/>
            <person name="Lander E.S."/>
            <person name="Sakaki Y."/>
        </authorList>
    </citation>
    <scope>NUCLEOTIDE SEQUENCE [LARGE SCALE GENOMIC DNA]</scope>
</reference>
<reference key="4">
    <citation type="journal article" date="2004" name="Genome Res.">
        <title>The status, quality, and expansion of the NIH full-length cDNA project: the Mammalian Gene Collection (MGC).</title>
        <authorList>
            <consortium name="The MGC Project Team"/>
        </authorList>
    </citation>
    <scope>NUCLEOTIDE SEQUENCE [LARGE SCALE MRNA] (ISOFORM 1)</scope>
    <scope>VARIANTS TRP-7; ARG-23; TYR-76 AND VAL-181</scope>
    <source>
        <tissue>Bone marrow</tissue>
        <tissue>Colon</tissue>
        <tissue>Eye</tissue>
    </source>
</reference>
<reference key="5">
    <citation type="journal article" date="2004" name="J. Biol. Chem.">
        <title>Induced inhibition of ischemic/hypoxic injury by APIP, a novel Apaf-1-interacting protein.</title>
        <authorList>
            <person name="Cho D.-H."/>
            <person name="Hong Y.-M."/>
            <person name="Lee H.-J."/>
            <person name="Woo H.-N."/>
            <person name="Pyo J.-O."/>
            <person name="Mak T.W."/>
            <person name="Jung Y.-K."/>
        </authorList>
    </citation>
    <scope>FUNCTION</scope>
    <scope>INTERACTION WITH APAF1</scope>
    <scope>TISSUE SPECIFICITY</scope>
    <scope>SUBCELLULAR LOCATION</scope>
    <scope>ALTERNATIVE SPLICING (ISOFORM 2)</scope>
</reference>
<reference key="6">
    <citation type="journal article" date="2011" name="BMC Syst. Biol.">
        <title>Initial characterization of the human central proteome.</title>
        <authorList>
            <person name="Burkard T.R."/>
            <person name="Planyavsky M."/>
            <person name="Kaupe I."/>
            <person name="Breitwieser F.P."/>
            <person name="Buerckstuemmer T."/>
            <person name="Bennett K.L."/>
            <person name="Superti-Furga G."/>
            <person name="Colinge J."/>
        </authorList>
    </citation>
    <scope>IDENTIFICATION BY MASS SPECTROMETRY [LARGE SCALE ANALYSIS]</scope>
</reference>
<reference key="7">
    <citation type="journal article" date="2011" name="Sci. Signal.">
        <title>System-wide temporal characterization of the proteome and phosphoproteome of human embryonic stem cell differentiation.</title>
        <authorList>
            <person name="Rigbolt K.T."/>
            <person name="Prokhorova T.A."/>
            <person name="Akimov V."/>
            <person name="Henningsen J."/>
            <person name="Johansen P.T."/>
            <person name="Kratchmarova I."/>
            <person name="Kassem M."/>
            <person name="Mann M."/>
            <person name="Olsen J.V."/>
            <person name="Blagoev B."/>
        </authorList>
    </citation>
    <scope>PHOSPHORYLATION [LARGE SCALE ANALYSIS] AT SER-87</scope>
    <scope>IDENTIFICATION BY MASS SPECTROMETRY [LARGE SCALE ANALYSIS]</scope>
</reference>
<reference key="8">
    <citation type="journal article" date="2012" name="PLoS ONE">
        <title>Functional identification of APIP as human mtnB, a key enzyme in the methionine salvage pathway.</title>
        <authorList>
            <person name="Mary C."/>
            <person name="Duek P."/>
            <person name="Salleron L."/>
            <person name="Tienz P."/>
            <person name="Bumann D."/>
            <person name="Bairoch A."/>
            <person name="Lane L."/>
        </authorList>
    </citation>
    <scope>FUNCTION</scope>
    <scope>PATHWAY</scope>
    <scope>ALTERNATIVE SPLICING (ISOFORM 2)</scope>
    <scope>SUBCELLULAR LOCATION</scope>
    <scope>TISSUE SPECIFICITY</scope>
    <scope>MUTAGENESIS OF SER-84; SER-87; SER-89; HIS-115; HIS-117 AND HIS-195</scope>
</reference>
<reference key="9">
    <citation type="journal article" date="2012" name="Proc. Natl. Acad. Sci. U.S.A.">
        <title>Functional genetic screen of human diversity reveals that a methionine salvage enzyme regulates inflammatory cell death.</title>
        <authorList>
            <person name="Ko D.C."/>
            <person name="Gamazon E.R."/>
            <person name="Shukla K.P."/>
            <person name="Pfuetzner R.A."/>
            <person name="Whittington D."/>
            <person name="Holden T.D."/>
            <person name="Brittnacher M.J."/>
            <person name="Fong C."/>
            <person name="Radey M."/>
            <person name="Ogohara C."/>
            <person name="Stark A.L."/>
            <person name="Akey J.M."/>
            <person name="Dolan M.E."/>
            <person name="Wurfel M.M."/>
            <person name="Miller S.I."/>
        </authorList>
    </citation>
    <scope>FUNCTION</scope>
    <scope>INTERACTION WITH CASP1</scope>
    <scope>MUTAGENESIS OF CYS-97 AND HIS-115</scope>
</reference>
<reference key="10">
    <citation type="journal article" date="2013" name="J. Proteome Res.">
        <title>Toward a comprehensive characterization of a human cancer cell phosphoproteome.</title>
        <authorList>
            <person name="Zhou H."/>
            <person name="Di Palma S."/>
            <person name="Preisinger C."/>
            <person name="Peng M."/>
            <person name="Polat A.N."/>
            <person name="Heck A.J."/>
            <person name="Mohammed S."/>
        </authorList>
    </citation>
    <scope>PHOSPHORYLATION [LARGE SCALE ANALYSIS] AT SER-87</scope>
    <scope>IDENTIFICATION BY MASS SPECTROMETRY [LARGE SCALE ANALYSIS]</scope>
    <source>
        <tissue>Cervix carcinoma</tissue>
    </source>
</reference>
<reference key="11">
    <citation type="journal article" date="2014" name="Proc. Natl. Acad. Sci. U.S.A.">
        <title>Structural and biochemical basis for the inhibition of cell death by APIP, a methionine salvage enzyme.</title>
        <authorList>
            <person name="Kang W."/>
            <person name="Hong S.H."/>
            <person name="Lee H.M."/>
            <person name="Kim N.Y."/>
            <person name="Lim Y.C."/>
            <person name="Le le T.M."/>
            <person name="Lim B."/>
            <person name="Kim H.C."/>
            <person name="Kim T.Y."/>
            <person name="Ashida H."/>
            <person name="Yokota A."/>
            <person name="Hah S.S."/>
            <person name="Chun K.H."/>
            <person name="Jung Y.K."/>
            <person name="Yang J.K."/>
        </authorList>
    </citation>
    <scope>X-RAY CRYSTALLOGRAPHY (2.00 ANGSTROMS) OF 20-242 IN COMPLEX WITH ZINC</scope>
    <scope>CATALYTIC ACTIVITY</scope>
    <scope>BIOPHYSICOCHEMICAL PROPERTIES</scope>
    <scope>COFACTOR</scope>
    <scope>FUNCTION</scope>
    <scope>PATHWAY</scope>
    <scope>ACTIVE SITE</scope>
    <scope>SUBUNIT</scope>
    <scope>MUTAGENESIS OF GLN-96; CYS-97; HIS-115 AND GLU-139</scope>
</reference>
<organism>
    <name type="scientific">Homo sapiens</name>
    <name type="common">Human</name>
    <dbReference type="NCBI Taxonomy" id="9606"/>
    <lineage>
        <taxon>Eukaryota</taxon>
        <taxon>Metazoa</taxon>
        <taxon>Chordata</taxon>
        <taxon>Craniata</taxon>
        <taxon>Vertebrata</taxon>
        <taxon>Euteleostomi</taxon>
        <taxon>Mammalia</taxon>
        <taxon>Eutheria</taxon>
        <taxon>Euarchontoglires</taxon>
        <taxon>Primates</taxon>
        <taxon>Haplorrhini</taxon>
        <taxon>Catarrhini</taxon>
        <taxon>Hominidae</taxon>
        <taxon>Homo</taxon>
    </lineage>
</organism>
<sequence>MSGCDAREGDCCSRRCGAQDKEHPRYLIPELCKQFYHLGWVTGTGGGISLKHGDEIYIAPSGVQKERIQPEDMFVCDINEKDISGPSPSKKLKKSQCTPLFMNAYTMRGAGAVIHTHSKAAVMATLLFPGREFKITHQEMIKGIKKCTSGGYYRYDDMLVVPIIENTPEEKDLKDRMAHAMNEYPDSCAVLVRRHGVYVWGETWEKAKTMCECYDYLFDIAVSMKKVGLDPSQLPVGENGIV</sequence>
<comment type="function">
    <text evidence="1 3 5 6 7">Catalyzes the dehydration of methylthioribulose-1-phosphate (MTRu-1-P) into 2,3-diketo-5-methylthiopentyl-1-phosphate (DK-MTP-1-P). Functions in the methionine salvage pathway, which plays a key role in cancer, apoptosis, microbial proliferation and inflammation. May inhibit the CASP1-related inflammatory response (pyroptosis), the CASP9-dependent apoptotic pathway and the cytochrome c-dependent and APAF1-mediated cell death.</text>
</comment>
<comment type="catalytic activity">
    <reaction evidence="1 7">
        <text>5-(methylsulfanyl)-D-ribulose 1-phosphate = 5-methylsulfanyl-2,3-dioxopentyl phosphate + H2O</text>
        <dbReference type="Rhea" id="RHEA:15549"/>
        <dbReference type="ChEBI" id="CHEBI:15377"/>
        <dbReference type="ChEBI" id="CHEBI:58548"/>
        <dbReference type="ChEBI" id="CHEBI:58828"/>
        <dbReference type="EC" id="4.2.1.109"/>
    </reaction>
</comment>
<comment type="cofactor">
    <cofactor evidence="1 7">
        <name>Zn(2+)</name>
        <dbReference type="ChEBI" id="CHEBI:29105"/>
    </cofactor>
    <text evidence="1 7">Binds 1 zinc ion per subunit.</text>
</comment>
<comment type="biophysicochemical properties">
    <kinetics>
        <KM>9.3 uM for S-methyl-5-thio-D-ribulose 1-phosphate</KM>
        <Vmax>1.39 umol/min/mg enzyme</Vmax>
    </kinetics>
</comment>
<comment type="pathway">
    <text evidence="1 6 7">Amino-acid biosynthesis; L-methionine biosynthesis via salvage pathway; L-methionine from S-methyl-5-thio-alpha-D-ribose 1-phosphate: step 2/6.</text>
</comment>
<comment type="subunit">
    <text evidence="1 3 5 7">Homotetramer (PubMed:24367089). Interacts with APAF1 (PubMed:15262985). May interact with CASP1 (PubMed:22837397).</text>
</comment>
<comment type="interaction">
    <interactant intactId="EBI-359248">
        <id>Q96GX9</id>
    </interactant>
    <interactant intactId="EBI-359248">
        <id>Q96GX9</id>
        <label>APIP</label>
    </interactant>
    <organismsDiffer>false</organismsDiffer>
    <experiments>12</experiments>
</comment>
<comment type="interaction">
    <interactant intactId="EBI-359248">
        <id>Q96GX9</id>
    </interactant>
    <interactant intactId="EBI-741542">
        <id>Q9UIF8</id>
        <label>BAZ2B</label>
    </interactant>
    <organismsDiffer>false</organismsDiffer>
    <experiments>3</experiments>
</comment>
<comment type="interaction">
    <interactant intactId="EBI-359248">
        <id>Q96GX9</id>
    </interactant>
    <interactant intactId="EBI-749051">
        <id>Q8IYR0</id>
        <label>CFAP206</label>
    </interactant>
    <organismsDiffer>false</organismsDiffer>
    <experiments>3</experiments>
</comment>
<comment type="interaction">
    <interactant intactId="EBI-359248">
        <id>Q96GX9</id>
    </interactant>
    <interactant intactId="EBI-739467">
        <id>Q9H8Y8</id>
        <label>GORASP2</label>
    </interactant>
    <organismsDiffer>false</organismsDiffer>
    <experiments>3</experiments>
</comment>
<comment type="interaction">
    <interactant intactId="EBI-359248">
        <id>Q96GX9</id>
    </interactant>
    <interactant intactId="EBI-353389">
        <id>P12268</id>
        <label>IMPDH2</label>
    </interactant>
    <organismsDiffer>false</organismsDiffer>
    <experiments>3</experiments>
</comment>
<comment type="interaction">
    <interactant intactId="EBI-359248">
        <id>Q96GX9</id>
    </interactant>
    <interactant intactId="EBI-739832">
        <id>Q8TBB1</id>
        <label>LNX1</label>
    </interactant>
    <organismsDiffer>false</organismsDiffer>
    <experiments>11</experiments>
</comment>
<comment type="interaction">
    <interactant intactId="EBI-359248">
        <id>Q96GX9</id>
    </interactant>
    <interactant intactId="EBI-741158">
        <id>Q96HA8</id>
        <label>NTAQ1</label>
    </interactant>
    <organismsDiffer>false</organismsDiffer>
    <experiments>5</experiments>
</comment>
<comment type="interaction">
    <interactant intactId="EBI-359248">
        <id>Q96GX9</id>
    </interactant>
    <interactant intactId="EBI-740486">
        <id>Q6ZVK8</id>
        <label>NUDT18</label>
    </interactant>
    <organismsDiffer>false</organismsDiffer>
    <experiments>4</experiments>
</comment>
<comment type="interaction">
    <interactant intactId="EBI-359248">
        <id>Q96GX9</id>
    </interactant>
    <interactant intactId="EBI-10239064">
        <id>Q17RL8</id>
        <label>PDZD4</label>
    </interactant>
    <organismsDiffer>false</organismsDiffer>
    <experiments>4</experiments>
</comment>
<comment type="interaction">
    <interactant intactId="EBI-359248">
        <id>Q96GX9</id>
    </interactant>
    <interactant intactId="EBI-359352">
        <id>P25786</id>
        <label>PSMA1</label>
    </interactant>
    <organismsDiffer>false</organismsDiffer>
    <experiments>3</experiments>
</comment>
<comment type="interaction">
    <interactant intactId="EBI-359248">
        <id>Q96GX9</id>
    </interactant>
    <interactant intactId="EBI-727004">
        <id>O00560</id>
        <label>SDCBP</label>
    </interactant>
    <organismsDiffer>false</organismsDiffer>
    <experiments>5</experiments>
</comment>
<comment type="interaction">
    <interactant intactId="EBI-359248">
        <id>Q96GX9</id>
    </interactant>
    <interactant intactId="EBI-307486">
        <id>P63208</id>
        <label>SKP1</label>
    </interactant>
    <organismsDiffer>false</organismsDiffer>
    <experiments>3</experiments>
</comment>
<comment type="interaction">
    <interactant intactId="EBI-359248">
        <id>Q96GX9</id>
    </interactant>
    <interactant intactId="EBI-395421">
        <id>Q16637</id>
        <label>SMN2</label>
    </interactant>
    <organismsDiffer>false</organismsDiffer>
    <experiments>3</experiments>
</comment>
<comment type="interaction">
    <interactant intactId="EBI-359248">
        <id>Q96GX9</id>
    </interactant>
    <interactant intactId="EBI-431907">
        <id>O14787</id>
        <label>TNPO2</label>
    </interactant>
    <organismsDiffer>false</organismsDiffer>
    <experiments>4</experiments>
</comment>
<comment type="interaction">
    <interactant intactId="EBI-359248">
        <id>Q96GX9</id>
    </interactant>
    <interactant intactId="EBI-739485">
        <id>Q9Y3Q8</id>
        <label>TSC22D4</label>
    </interactant>
    <organismsDiffer>false</organismsDiffer>
    <experiments>4</experiments>
</comment>
<comment type="interaction">
    <interactant intactId="EBI-359248">
        <id>Q96GX9</id>
    </interactant>
    <interactant intactId="EBI-739899">
        <id>P24278</id>
        <label>ZBTB25</label>
    </interactant>
    <organismsDiffer>false</organismsDiffer>
    <experiments>3</experiments>
</comment>
<comment type="subcellular location">
    <subcellularLocation>
        <location evidence="1 3 6">Cytoplasm</location>
    </subcellularLocation>
</comment>
<comment type="alternative products">
    <event type="alternative splicing"/>
    <isoform>
        <id>Q96GX9-1</id>
        <name>1</name>
        <name>Long</name>
        <sequence type="displayed"/>
    </isoform>
    <isoform>
        <id>Q96GX9-3</id>
        <name>2</name>
        <name>Short</name>
        <sequence type="described" ref="VSP_044403"/>
    </isoform>
</comment>
<comment type="tissue specificity">
    <text evidence="3 6">Isoform 1 is ubiquitously expressed. Isoform 2 is expressed at lower levels and detected in heart, brain, pancreas, liver, placenta, skeletal muscle and kidney.</text>
</comment>
<comment type="similarity">
    <text evidence="1">Belongs to the aldolase class II family. MtnB subfamily.</text>
</comment>